<sequence>MIVGLGTDIVEIARIADKVPAAGDEAALAKCPLAKRVLTQAEMAIFVASSQPGRYLAKRFAAKEAAAKALGTGIGRGVSFQHIEISNDANGAPLIAFQGGAAERLSLLGGSRAHLSIADEKHYATATVILESN</sequence>
<comment type="function">
    <text evidence="1">Transfers the 4'-phosphopantetheine moiety from coenzyme A to a Ser of acyl-carrier-protein.</text>
</comment>
<comment type="catalytic activity">
    <reaction evidence="1">
        <text>apo-[ACP] + CoA = holo-[ACP] + adenosine 3',5'-bisphosphate + H(+)</text>
        <dbReference type="Rhea" id="RHEA:12068"/>
        <dbReference type="Rhea" id="RHEA-COMP:9685"/>
        <dbReference type="Rhea" id="RHEA-COMP:9690"/>
        <dbReference type="ChEBI" id="CHEBI:15378"/>
        <dbReference type="ChEBI" id="CHEBI:29999"/>
        <dbReference type="ChEBI" id="CHEBI:57287"/>
        <dbReference type="ChEBI" id="CHEBI:58343"/>
        <dbReference type="ChEBI" id="CHEBI:64479"/>
        <dbReference type="EC" id="2.7.8.7"/>
    </reaction>
</comment>
<comment type="cofactor">
    <cofactor evidence="1">
        <name>Mg(2+)</name>
        <dbReference type="ChEBI" id="CHEBI:18420"/>
    </cofactor>
</comment>
<comment type="subcellular location">
    <subcellularLocation>
        <location evidence="1">Cytoplasm</location>
    </subcellularLocation>
</comment>
<comment type="similarity">
    <text evidence="1">Belongs to the P-Pant transferase superfamily. AcpS family.</text>
</comment>
<keyword id="KW-0963">Cytoplasm</keyword>
<keyword id="KW-0275">Fatty acid biosynthesis</keyword>
<keyword id="KW-0276">Fatty acid metabolism</keyword>
<keyword id="KW-0444">Lipid biosynthesis</keyword>
<keyword id="KW-0443">Lipid metabolism</keyword>
<keyword id="KW-0460">Magnesium</keyword>
<keyword id="KW-0479">Metal-binding</keyword>
<keyword id="KW-1185">Reference proteome</keyword>
<keyword id="KW-0808">Transferase</keyword>
<reference key="1">
    <citation type="submission" date="2007-03" db="EMBL/GenBank/DDBJ databases">
        <title>Complete sequence of Shewanella loihica PV-4.</title>
        <authorList>
            <consortium name="US DOE Joint Genome Institute"/>
            <person name="Copeland A."/>
            <person name="Lucas S."/>
            <person name="Lapidus A."/>
            <person name="Barry K."/>
            <person name="Detter J.C."/>
            <person name="Glavina del Rio T."/>
            <person name="Hammon N."/>
            <person name="Israni S."/>
            <person name="Dalin E."/>
            <person name="Tice H."/>
            <person name="Pitluck S."/>
            <person name="Chain P."/>
            <person name="Malfatti S."/>
            <person name="Shin M."/>
            <person name="Vergez L."/>
            <person name="Schmutz J."/>
            <person name="Larimer F."/>
            <person name="Land M."/>
            <person name="Hauser L."/>
            <person name="Kyrpides N."/>
            <person name="Mikhailova N."/>
            <person name="Romine M.F."/>
            <person name="Serres G."/>
            <person name="Fredrickson J."/>
            <person name="Tiedje J."/>
            <person name="Richardson P."/>
        </authorList>
    </citation>
    <scope>NUCLEOTIDE SEQUENCE [LARGE SCALE GENOMIC DNA]</scope>
    <source>
        <strain>ATCC BAA-1088 / PV-4</strain>
    </source>
</reference>
<proteinExistence type="inferred from homology"/>
<feature type="chain" id="PRO_1000008494" description="Holo-[acyl-carrier-protein] synthase">
    <location>
        <begin position="1"/>
        <end position="133"/>
    </location>
</feature>
<feature type="binding site" evidence="1">
    <location>
        <position position="8"/>
    </location>
    <ligand>
        <name>Mg(2+)</name>
        <dbReference type="ChEBI" id="CHEBI:18420"/>
    </ligand>
</feature>
<feature type="binding site" evidence="1">
    <location>
        <position position="64"/>
    </location>
    <ligand>
        <name>Mg(2+)</name>
        <dbReference type="ChEBI" id="CHEBI:18420"/>
    </ligand>
</feature>
<gene>
    <name evidence="1" type="primary">acpS</name>
    <name type="ordered locus">Shew_1058</name>
</gene>
<organism>
    <name type="scientific">Shewanella loihica (strain ATCC BAA-1088 / PV-4)</name>
    <dbReference type="NCBI Taxonomy" id="323850"/>
    <lineage>
        <taxon>Bacteria</taxon>
        <taxon>Pseudomonadati</taxon>
        <taxon>Pseudomonadota</taxon>
        <taxon>Gammaproteobacteria</taxon>
        <taxon>Alteromonadales</taxon>
        <taxon>Shewanellaceae</taxon>
        <taxon>Shewanella</taxon>
    </lineage>
</organism>
<dbReference type="EC" id="2.7.8.7" evidence="1"/>
<dbReference type="EMBL" id="CP000606">
    <property type="protein sequence ID" value="ABO22929.1"/>
    <property type="molecule type" value="Genomic_DNA"/>
</dbReference>
<dbReference type="RefSeq" id="WP_011864862.1">
    <property type="nucleotide sequence ID" value="NC_009092.1"/>
</dbReference>
<dbReference type="SMR" id="A3QBT1"/>
<dbReference type="STRING" id="323850.Shew_1058"/>
<dbReference type="KEGG" id="slo:Shew_1058"/>
<dbReference type="eggNOG" id="COG0736">
    <property type="taxonomic scope" value="Bacteria"/>
</dbReference>
<dbReference type="HOGENOM" id="CLU_089696_3_1_6"/>
<dbReference type="OrthoDB" id="517356at2"/>
<dbReference type="Proteomes" id="UP000001558">
    <property type="component" value="Chromosome"/>
</dbReference>
<dbReference type="GO" id="GO:0005737">
    <property type="term" value="C:cytoplasm"/>
    <property type="evidence" value="ECO:0007669"/>
    <property type="project" value="UniProtKB-SubCell"/>
</dbReference>
<dbReference type="GO" id="GO:0008897">
    <property type="term" value="F:holo-[acyl-carrier-protein] synthase activity"/>
    <property type="evidence" value="ECO:0007669"/>
    <property type="project" value="UniProtKB-UniRule"/>
</dbReference>
<dbReference type="GO" id="GO:0000287">
    <property type="term" value="F:magnesium ion binding"/>
    <property type="evidence" value="ECO:0007669"/>
    <property type="project" value="UniProtKB-UniRule"/>
</dbReference>
<dbReference type="GO" id="GO:0006633">
    <property type="term" value="P:fatty acid biosynthetic process"/>
    <property type="evidence" value="ECO:0007669"/>
    <property type="project" value="UniProtKB-UniRule"/>
</dbReference>
<dbReference type="FunFam" id="3.90.470.20:FF:000001">
    <property type="entry name" value="Holo-[acyl-carrier-protein] synthase"/>
    <property type="match status" value="1"/>
</dbReference>
<dbReference type="Gene3D" id="3.90.470.20">
    <property type="entry name" value="4'-phosphopantetheinyl transferase domain"/>
    <property type="match status" value="1"/>
</dbReference>
<dbReference type="HAMAP" id="MF_00101">
    <property type="entry name" value="AcpS"/>
    <property type="match status" value="1"/>
</dbReference>
<dbReference type="InterPro" id="IPR008278">
    <property type="entry name" value="4-PPantetheinyl_Trfase_dom"/>
</dbReference>
<dbReference type="InterPro" id="IPR037143">
    <property type="entry name" value="4-PPantetheinyl_Trfase_dom_sf"/>
</dbReference>
<dbReference type="InterPro" id="IPR002582">
    <property type="entry name" value="ACPS"/>
</dbReference>
<dbReference type="InterPro" id="IPR004568">
    <property type="entry name" value="Ppantetheine-prot_Trfase_dom"/>
</dbReference>
<dbReference type="NCBIfam" id="TIGR00516">
    <property type="entry name" value="acpS"/>
    <property type="match status" value="1"/>
</dbReference>
<dbReference type="NCBIfam" id="TIGR00556">
    <property type="entry name" value="pantethn_trn"/>
    <property type="match status" value="1"/>
</dbReference>
<dbReference type="Pfam" id="PF01648">
    <property type="entry name" value="ACPS"/>
    <property type="match status" value="1"/>
</dbReference>
<dbReference type="SUPFAM" id="SSF56214">
    <property type="entry name" value="4'-phosphopantetheinyl transferase"/>
    <property type="match status" value="1"/>
</dbReference>
<evidence type="ECO:0000255" key="1">
    <source>
        <dbReference type="HAMAP-Rule" id="MF_00101"/>
    </source>
</evidence>
<protein>
    <recommendedName>
        <fullName evidence="1">Holo-[acyl-carrier-protein] synthase</fullName>
        <shortName evidence="1">Holo-ACP synthase</shortName>
        <ecNumber evidence="1">2.7.8.7</ecNumber>
    </recommendedName>
    <alternativeName>
        <fullName evidence="1">4'-phosphopantetheinyl transferase AcpS</fullName>
    </alternativeName>
</protein>
<accession>A3QBT1</accession>
<name>ACPS_SHELP</name>